<keyword id="KW-1185">Reference proteome</keyword>
<keyword id="KW-1277">Toxin-antitoxin system</keyword>
<reference key="1">
    <citation type="journal article" date="1996" name="Science">
        <title>Complete genome sequence of the methanogenic archaeon, Methanococcus jannaschii.</title>
        <authorList>
            <person name="Bult C.J."/>
            <person name="White O."/>
            <person name="Olsen G.J."/>
            <person name="Zhou L."/>
            <person name="Fleischmann R.D."/>
            <person name="Sutton G.G."/>
            <person name="Blake J.A."/>
            <person name="FitzGerald L.M."/>
            <person name="Clayton R.A."/>
            <person name="Gocayne J.D."/>
            <person name="Kerlavage A.R."/>
            <person name="Dougherty B.A."/>
            <person name="Tomb J.-F."/>
            <person name="Adams M.D."/>
            <person name="Reich C.I."/>
            <person name="Overbeek R."/>
            <person name="Kirkness E.F."/>
            <person name="Weinstock K.G."/>
            <person name="Merrick J.M."/>
            <person name="Glodek A."/>
            <person name="Scott J.L."/>
            <person name="Geoghagen N.S.M."/>
            <person name="Weidman J.F."/>
            <person name="Fuhrmann J.L."/>
            <person name="Nguyen D."/>
            <person name="Utterback T.R."/>
            <person name="Kelley J.M."/>
            <person name="Peterson J.D."/>
            <person name="Sadow P.W."/>
            <person name="Hanna M.C."/>
            <person name="Cotton M.D."/>
            <person name="Roberts K.M."/>
            <person name="Hurst M.A."/>
            <person name="Kaine B.P."/>
            <person name="Borodovsky M."/>
            <person name="Klenk H.-P."/>
            <person name="Fraser C.M."/>
            <person name="Smith H.O."/>
            <person name="Woese C.R."/>
            <person name="Venter J.C."/>
        </authorList>
    </citation>
    <scope>NUCLEOTIDE SEQUENCE [LARGE SCALE GENOMIC DNA]</scope>
    <source>
        <strain>ATCC 43067 / DSM 2661 / JAL-1 / JCM 10045 / NBRC 100440</strain>
    </source>
</reference>
<reference key="2">
    <citation type="journal article" date="2005" name="Nucleic Acids Res.">
        <title>Toxin-antitoxin loci are highly abundant in free-living but lost from host-associated prokaryotes.</title>
        <authorList>
            <person name="Pandey D.P."/>
            <person name="Gerdes K."/>
        </authorList>
    </citation>
    <scope>IDENTIFICATION</scope>
    <scope>POSSIBLE FUNCTION</scope>
    <source>
        <strain>ATCC 43067 / DSM 2661 / JAL-1 / JCM 10045 / NBRC 100440</strain>
    </source>
</reference>
<dbReference type="EMBL" id="L77117">
    <property type="status" value="NOT_ANNOTATED_CDS"/>
    <property type="molecule type" value="Genomic_DNA"/>
</dbReference>
<dbReference type="RefSeq" id="WP_064496658.1">
    <property type="nucleotide sequence ID" value="NC_000909.1"/>
</dbReference>
<dbReference type="SMR" id="P0CW76"/>
<dbReference type="GeneID" id="27929976"/>
<dbReference type="InParanoid" id="P0CW76"/>
<dbReference type="OrthoDB" id="65782at2157"/>
<dbReference type="Proteomes" id="UP000000805">
    <property type="component" value="Chromosome"/>
</dbReference>
<dbReference type="Gene3D" id="6.10.250.2100">
    <property type="match status" value="1"/>
</dbReference>
<dbReference type="InterPro" id="IPR049537">
    <property type="entry name" value="RelB-like"/>
</dbReference>
<dbReference type="Pfam" id="PF18506">
    <property type="entry name" value="RelB-like"/>
    <property type="match status" value="1"/>
</dbReference>
<feature type="chain" id="PRO_0000408468" description="Putative antitoxin RelB2">
    <location>
        <begin position="1"/>
        <end position="61"/>
    </location>
</feature>
<proteinExistence type="predicted"/>
<name>RELB2_METJA</name>
<accession>P0CW76</accession>
<sequence>MSIVQSYITDEKGNIKGVILDYKTFKKIEELLLDYGLLKAMEEVENEEEIDLETAKKLLEQ</sequence>
<comment type="function">
    <text evidence="1">Antitoxin component of a type II toxin-antitoxin (TA) system. Its cognate toxin is RelE2 (Potential).</text>
</comment>
<gene>
    <name type="primary">relB2</name>
    <name type="ordered locus">MJ0909.1</name>
</gene>
<evidence type="ECO:0000305" key="1"/>
<protein>
    <recommendedName>
        <fullName>Putative antitoxin RelB2</fullName>
    </recommendedName>
</protein>
<organism>
    <name type="scientific">Methanocaldococcus jannaschii (strain ATCC 43067 / DSM 2661 / JAL-1 / JCM 10045 / NBRC 100440)</name>
    <name type="common">Methanococcus jannaschii</name>
    <dbReference type="NCBI Taxonomy" id="243232"/>
    <lineage>
        <taxon>Archaea</taxon>
        <taxon>Methanobacteriati</taxon>
        <taxon>Methanobacteriota</taxon>
        <taxon>Methanomada group</taxon>
        <taxon>Methanococci</taxon>
        <taxon>Methanococcales</taxon>
        <taxon>Methanocaldococcaceae</taxon>
        <taxon>Methanocaldococcus</taxon>
    </lineage>
</organism>